<gene>
    <name evidence="1" type="primary">smpB</name>
    <name type="ordered locus">AZC_1244</name>
</gene>
<keyword id="KW-0963">Cytoplasm</keyword>
<keyword id="KW-1185">Reference proteome</keyword>
<keyword id="KW-0694">RNA-binding</keyword>
<organism>
    <name type="scientific">Azorhizobium caulinodans (strain ATCC 43989 / DSM 5975 / JCM 20966 / LMG 6465 / NBRC 14845 / NCIMB 13405 / ORS 571)</name>
    <dbReference type="NCBI Taxonomy" id="438753"/>
    <lineage>
        <taxon>Bacteria</taxon>
        <taxon>Pseudomonadati</taxon>
        <taxon>Pseudomonadota</taxon>
        <taxon>Alphaproteobacteria</taxon>
        <taxon>Hyphomicrobiales</taxon>
        <taxon>Xanthobacteraceae</taxon>
        <taxon>Azorhizobium</taxon>
    </lineage>
</organism>
<accession>A8I0D5</accession>
<name>SSRP_AZOC5</name>
<proteinExistence type="inferred from homology"/>
<feature type="chain" id="PRO_0000331024" description="SsrA-binding protein">
    <location>
        <begin position="1"/>
        <end position="160"/>
    </location>
</feature>
<feature type="region of interest" description="Disordered" evidence="2">
    <location>
        <begin position="134"/>
        <end position="160"/>
    </location>
</feature>
<feature type="compositionally biased region" description="Basic and acidic residues" evidence="2">
    <location>
        <begin position="138"/>
        <end position="160"/>
    </location>
</feature>
<dbReference type="EMBL" id="AP009384">
    <property type="protein sequence ID" value="BAF87242.1"/>
    <property type="molecule type" value="Genomic_DNA"/>
</dbReference>
<dbReference type="SMR" id="A8I0D5"/>
<dbReference type="STRING" id="438753.AZC_1244"/>
<dbReference type="KEGG" id="azc:AZC_1244"/>
<dbReference type="eggNOG" id="COG0691">
    <property type="taxonomic scope" value="Bacteria"/>
</dbReference>
<dbReference type="HOGENOM" id="CLU_108953_0_1_5"/>
<dbReference type="Proteomes" id="UP000000270">
    <property type="component" value="Chromosome"/>
</dbReference>
<dbReference type="GO" id="GO:0005829">
    <property type="term" value="C:cytosol"/>
    <property type="evidence" value="ECO:0007669"/>
    <property type="project" value="TreeGrafter"/>
</dbReference>
<dbReference type="GO" id="GO:0003723">
    <property type="term" value="F:RNA binding"/>
    <property type="evidence" value="ECO:0007669"/>
    <property type="project" value="UniProtKB-UniRule"/>
</dbReference>
<dbReference type="GO" id="GO:0070929">
    <property type="term" value="P:trans-translation"/>
    <property type="evidence" value="ECO:0007669"/>
    <property type="project" value="UniProtKB-UniRule"/>
</dbReference>
<dbReference type="CDD" id="cd09294">
    <property type="entry name" value="SmpB"/>
    <property type="match status" value="1"/>
</dbReference>
<dbReference type="Gene3D" id="2.40.280.10">
    <property type="match status" value="1"/>
</dbReference>
<dbReference type="HAMAP" id="MF_00023">
    <property type="entry name" value="SmpB"/>
    <property type="match status" value="1"/>
</dbReference>
<dbReference type="InterPro" id="IPR023620">
    <property type="entry name" value="SmpB"/>
</dbReference>
<dbReference type="InterPro" id="IPR000037">
    <property type="entry name" value="SsrA-bd_prot"/>
</dbReference>
<dbReference type="InterPro" id="IPR020081">
    <property type="entry name" value="SsrA-bd_prot_CS"/>
</dbReference>
<dbReference type="NCBIfam" id="NF003843">
    <property type="entry name" value="PRK05422.1"/>
    <property type="match status" value="1"/>
</dbReference>
<dbReference type="NCBIfam" id="TIGR00086">
    <property type="entry name" value="smpB"/>
    <property type="match status" value="1"/>
</dbReference>
<dbReference type="PANTHER" id="PTHR30308:SF2">
    <property type="entry name" value="SSRA-BINDING PROTEIN"/>
    <property type="match status" value="1"/>
</dbReference>
<dbReference type="PANTHER" id="PTHR30308">
    <property type="entry name" value="TMRNA-BINDING COMPONENT OF TRANS-TRANSLATION TAGGING COMPLEX"/>
    <property type="match status" value="1"/>
</dbReference>
<dbReference type="Pfam" id="PF01668">
    <property type="entry name" value="SmpB"/>
    <property type="match status" value="1"/>
</dbReference>
<dbReference type="SUPFAM" id="SSF74982">
    <property type="entry name" value="Small protein B (SmpB)"/>
    <property type="match status" value="1"/>
</dbReference>
<dbReference type="PROSITE" id="PS01317">
    <property type="entry name" value="SSRP"/>
    <property type="match status" value="1"/>
</dbReference>
<evidence type="ECO:0000255" key="1">
    <source>
        <dbReference type="HAMAP-Rule" id="MF_00023"/>
    </source>
</evidence>
<evidence type="ECO:0000256" key="2">
    <source>
        <dbReference type="SAM" id="MobiDB-lite"/>
    </source>
</evidence>
<sequence length="160" mass="18657">MMAEKKKKELPRKVVADNRRARFDYDIGEVFEAGIALKGTEVKALRTGKATIHESYAGGKNGELWLFNSYVPEYLEANRFNHEPRRPRKLLMHKRQIHKLTVAVEREGMTVVPLKIYFNEQGRAKVEVALAKGRKAHDKREAVKERDWNRDKARLMRDRG</sequence>
<protein>
    <recommendedName>
        <fullName evidence="1">SsrA-binding protein</fullName>
    </recommendedName>
    <alternativeName>
        <fullName evidence="1">Small protein B</fullName>
    </alternativeName>
</protein>
<comment type="function">
    <text evidence="1">Required for rescue of stalled ribosomes mediated by trans-translation. Binds to transfer-messenger RNA (tmRNA), required for stable association of tmRNA with ribosomes. tmRNA and SmpB together mimic tRNA shape, replacing the anticodon stem-loop with SmpB. tmRNA is encoded by the ssrA gene; the 2 termini fold to resemble tRNA(Ala) and it encodes a 'tag peptide', a short internal open reading frame. During trans-translation Ala-aminoacylated tmRNA acts like a tRNA, entering the A-site of stalled ribosomes, displacing the stalled mRNA. The ribosome then switches to translate the ORF on the tmRNA; the nascent peptide is terminated with the 'tag peptide' encoded by the tmRNA and targeted for degradation. The ribosome is freed to recommence translation, which seems to be the essential function of trans-translation.</text>
</comment>
<comment type="subcellular location">
    <subcellularLocation>
        <location evidence="1">Cytoplasm</location>
    </subcellularLocation>
    <text evidence="1">The tmRNA-SmpB complex associates with stalled 70S ribosomes.</text>
</comment>
<comment type="similarity">
    <text evidence="1">Belongs to the SmpB family.</text>
</comment>
<reference key="1">
    <citation type="submission" date="2007-04" db="EMBL/GenBank/DDBJ databases">
        <title>Complete genome sequence of the nitrogen-fixing bacterium Azorhizobium caulinodans ORS571.</title>
        <authorList>
            <person name="Lee K.B."/>
            <person name="Backer P.D."/>
            <person name="Aono T."/>
            <person name="Liu C.T."/>
            <person name="Suzuki S."/>
            <person name="Suzuki T."/>
            <person name="Kaneko T."/>
            <person name="Yamada M."/>
            <person name="Tabata S."/>
            <person name="Kupfer D.M."/>
            <person name="Najar F.Z."/>
            <person name="Wiley G.B."/>
            <person name="Roe B."/>
            <person name="Binnewies T."/>
            <person name="Ussery D."/>
            <person name="Vereecke D."/>
            <person name="Gevers D."/>
            <person name="Holsters M."/>
            <person name="Oyaizu H."/>
        </authorList>
    </citation>
    <scope>NUCLEOTIDE SEQUENCE [LARGE SCALE GENOMIC DNA]</scope>
    <source>
        <strain>ATCC 43989 / DSM 5975 / JCM 20966 / LMG 6465 / NBRC 14845 / NCIMB 13405 / ORS 571</strain>
    </source>
</reference>